<accession>B1LJJ5</accession>
<dbReference type="EMBL" id="CP000970">
    <property type="protein sequence ID" value="ACB18678.1"/>
    <property type="molecule type" value="Genomic_DNA"/>
</dbReference>
<dbReference type="RefSeq" id="WP_000130305.1">
    <property type="nucleotide sequence ID" value="NC_010498.1"/>
</dbReference>
<dbReference type="SMR" id="B1LJJ5"/>
<dbReference type="GeneID" id="93777016"/>
<dbReference type="KEGG" id="ecm:EcSMS35_0481"/>
<dbReference type="HOGENOM" id="CLU_014218_8_2_6"/>
<dbReference type="Proteomes" id="UP000007011">
    <property type="component" value="Chromosome"/>
</dbReference>
<dbReference type="GO" id="GO:0009376">
    <property type="term" value="C:HslUV protease complex"/>
    <property type="evidence" value="ECO:0007669"/>
    <property type="project" value="TreeGrafter"/>
</dbReference>
<dbReference type="GO" id="GO:0005524">
    <property type="term" value="F:ATP binding"/>
    <property type="evidence" value="ECO:0007669"/>
    <property type="project" value="UniProtKB-UniRule"/>
</dbReference>
<dbReference type="GO" id="GO:0016887">
    <property type="term" value="F:ATP hydrolysis activity"/>
    <property type="evidence" value="ECO:0007669"/>
    <property type="project" value="InterPro"/>
</dbReference>
<dbReference type="GO" id="GO:0140662">
    <property type="term" value="F:ATP-dependent protein folding chaperone"/>
    <property type="evidence" value="ECO:0007669"/>
    <property type="project" value="InterPro"/>
</dbReference>
<dbReference type="GO" id="GO:0046983">
    <property type="term" value="F:protein dimerization activity"/>
    <property type="evidence" value="ECO:0007669"/>
    <property type="project" value="InterPro"/>
</dbReference>
<dbReference type="GO" id="GO:0051082">
    <property type="term" value="F:unfolded protein binding"/>
    <property type="evidence" value="ECO:0007669"/>
    <property type="project" value="UniProtKB-UniRule"/>
</dbReference>
<dbReference type="GO" id="GO:0008270">
    <property type="term" value="F:zinc ion binding"/>
    <property type="evidence" value="ECO:0007669"/>
    <property type="project" value="InterPro"/>
</dbReference>
<dbReference type="GO" id="GO:0051301">
    <property type="term" value="P:cell division"/>
    <property type="evidence" value="ECO:0007669"/>
    <property type="project" value="TreeGrafter"/>
</dbReference>
<dbReference type="GO" id="GO:0051603">
    <property type="term" value="P:proteolysis involved in protein catabolic process"/>
    <property type="evidence" value="ECO:0007669"/>
    <property type="project" value="TreeGrafter"/>
</dbReference>
<dbReference type="CDD" id="cd19497">
    <property type="entry name" value="RecA-like_ClpX"/>
    <property type="match status" value="1"/>
</dbReference>
<dbReference type="FunFam" id="1.10.8.60:FF:000002">
    <property type="entry name" value="ATP-dependent Clp protease ATP-binding subunit ClpX"/>
    <property type="match status" value="1"/>
</dbReference>
<dbReference type="FunFam" id="3.40.50.300:FF:000005">
    <property type="entry name" value="ATP-dependent Clp protease ATP-binding subunit ClpX"/>
    <property type="match status" value="1"/>
</dbReference>
<dbReference type="Gene3D" id="1.10.8.60">
    <property type="match status" value="1"/>
</dbReference>
<dbReference type="Gene3D" id="6.20.220.10">
    <property type="entry name" value="ClpX chaperone, C4-type zinc finger domain"/>
    <property type="match status" value="1"/>
</dbReference>
<dbReference type="Gene3D" id="3.40.50.300">
    <property type="entry name" value="P-loop containing nucleotide triphosphate hydrolases"/>
    <property type="match status" value="1"/>
</dbReference>
<dbReference type="HAMAP" id="MF_00175">
    <property type="entry name" value="ClpX"/>
    <property type="match status" value="1"/>
</dbReference>
<dbReference type="InterPro" id="IPR003593">
    <property type="entry name" value="AAA+_ATPase"/>
</dbReference>
<dbReference type="InterPro" id="IPR050052">
    <property type="entry name" value="ATP-dep_Clp_protease_ClpX"/>
</dbReference>
<dbReference type="InterPro" id="IPR003959">
    <property type="entry name" value="ATPase_AAA_core"/>
</dbReference>
<dbReference type="InterPro" id="IPR019489">
    <property type="entry name" value="Clp_ATPase_C"/>
</dbReference>
<dbReference type="InterPro" id="IPR004487">
    <property type="entry name" value="Clp_protease_ATP-bd_su_ClpX"/>
</dbReference>
<dbReference type="InterPro" id="IPR046425">
    <property type="entry name" value="ClpX_bact"/>
</dbReference>
<dbReference type="InterPro" id="IPR027417">
    <property type="entry name" value="P-loop_NTPase"/>
</dbReference>
<dbReference type="InterPro" id="IPR010603">
    <property type="entry name" value="Znf_CppX_C4"/>
</dbReference>
<dbReference type="InterPro" id="IPR038366">
    <property type="entry name" value="Znf_CppX_C4_sf"/>
</dbReference>
<dbReference type="NCBIfam" id="TIGR00382">
    <property type="entry name" value="clpX"/>
    <property type="match status" value="1"/>
</dbReference>
<dbReference type="NCBIfam" id="NF003745">
    <property type="entry name" value="PRK05342.1"/>
    <property type="match status" value="1"/>
</dbReference>
<dbReference type="PANTHER" id="PTHR48102:SF7">
    <property type="entry name" value="ATP-DEPENDENT CLP PROTEASE ATP-BINDING SUBUNIT CLPX-LIKE, MITOCHONDRIAL"/>
    <property type="match status" value="1"/>
</dbReference>
<dbReference type="PANTHER" id="PTHR48102">
    <property type="entry name" value="ATP-DEPENDENT CLP PROTEASE ATP-BINDING SUBUNIT CLPX-LIKE, MITOCHONDRIAL-RELATED"/>
    <property type="match status" value="1"/>
</dbReference>
<dbReference type="Pfam" id="PF07724">
    <property type="entry name" value="AAA_2"/>
    <property type="match status" value="1"/>
</dbReference>
<dbReference type="Pfam" id="PF10431">
    <property type="entry name" value="ClpB_D2-small"/>
    <property type="match status" value="1"/>
</dbReference>
<dbReference type="Pfam" id="PF06689">
    <property type="entry name" value="zf-C4_ClpX"/>
    <property type="match status" value="1"/>
</dbReference>
<dbReference type="SMART" id="SM00382">
    <property type="entry name" value="AAA"/>
    <property type="match status" value="1"/>
</dbReference>
<dbReference type="SMART" id="SM01086">
    <property type="entry name" value="ClpB_D2-small"/>
    <property type="match status" value="1"/>
</dbReference>
<dbReference type="SMART" id="SM00994">
    <property type="entry name" value="zf-C4_ClpX"/>
    <property type="match status" value="1"/>
</dbReference>
<dbReference type="SUPFAM" id="SSF57716">
    <property type="entry name" value="Glucocorticoid receptor-like (DNA-binding domain)"/>
    <property type="match status" value="1"/>
</dbReference>
<dbReference type="SUPFAM" id="SSF52540">
    <property type="entry name" value="P-loop containing nucleoside triphosphate hydrolases"/>
    <property type="match status" value="1"/>
</dbReference>
<dbReference type="PROSITE" id="PS51902">
    <property type="entry name" value="CLPX_ZB"/>
    <property type="match status" value="1"/>
</dbReference>
<comment type="function">
    <text evidence="1">ATP-dependent specificity component of the Clp protease. It directs the protease to specific substrates. Can perform chaperone functions in the absence of ClpP.</text>
</comment>
<comment type="subunit">
    <text evidence="1">Component of the ClpX-ClpP complex. Forms a hexameric ring that, in the presence of ATP, binds to fourteen ClpP subunits assembled into a disk-like structure with a central cavity, resembling the structure of eukaryotic proteasomes.</text>
</comment>
<comment type="similarity">
    <text evidence="1">Belongs to the ClpX chaperone family.</text>
</comment>
<sequence>MTDKRKDGSGKLLYCSFCGKSQHEVRKLIAGPSVYICDECVDLCNDIIREEIKEVAPHRERSALPTPHEIRNHLDDYVIGQEQAKKVLAVAVYNHYKRLRNGDTSNGVELGKSNILLIGPTGSGKTLLAETLARLLDVPFTMADATTLTEAGYVGEDVENIIQKLLQKCDYDVQKAQRGIVYIDEIDKISRKSDNPSITRDVSGEGVQQALLKLIEGTVAAVPPQGGRKHPQQEFLQVDTSKILFICGGAFAGLDKVISHRVETGSGIGFGATVKAKSDKASEGELLAQVEPEDLIKFGLIPEFIGRLPVVATLNELSEEALIQILKEPKNALTKQYQALFNLEGVDLEFRDEALDAIAKKAMARKTGARGLRSIVEAALLDTMYDLPSMEDVEKVVIDESVIDGQSKPLLIYGKPEAQQASGE</sequence>
<reference key="1">
    <citation type="journal article" date="2008" name="J. Bacteriol.">
        <title>Insights into the environmental resistance gene pool from the genome sequence of the multidrug-resistant environmental isolate Escherichia coli SMS-3-5.</title>
        <authorList>
            <person name="Fricke W.F."/>
            <person name="Wright M.S."/>
            <person name="Lindell A.H."/>
            <person name="Harkins D.M."/>
            <person name="Baker-Austin C."/>
            <person name="Ravel J."/>
            <person name="Stepanauskas R."/>
        </authorList>
    </citation>
    <scope>NUCLEOTIDE SEQUENCE [LARGE SCALE GENOMIC DNA]</scope>
    <source>
        <strain>SMS-3-5 / SECEC</strain>
    </source>
</reference>
<name>CLPX_ECOSM</name>
<keyword id="KW-0067">ATP-binding</keyword>
<keyword id="KW-0143">Chaperone</keyword>
<keyword id="KW-0479">Metal-binding</keyword>
<keyword id="KW-0547">Nucleotide-binding</keyword>
<keyword id="KW-0862">Zinc</keyword>
<evidence type="ECO:0000255" key="1">
    <source>
        <dbReference type="HAMAP-Rule" id="MF_00175"/>
    </source>
</evidence>
<evidence type="ECO:0000255" key="2">
    <source>
        <dbReference type="PROSITE-ProRule" id="PRU01250"/>
    </source>
</evidence>
<gene>
    <name evidence="1" type="primary">clpX</name>
    <name type="ordered locus">EcSMS35_0481</name>
</gene>
<protein>
    <recommendedName>
        <fullName evidence="1">ATP-dependent Clp protease ATP-binding subunit ClpX</fullName>
    </recommendedName>
</protein>
<organism>
    <name type="scientific">Escherichia coli (strain SMS-3-5 / SECEC)</name>
    <dbReference type="NCBI Taxonomy" id="439855"/>
    <lineage>
        <taxon>Bacteria</taxon>
        <taxon>Pseudomonadati</taxon>
        <taxon>Pseudomonadota</taxon>
        <taxon>Gammaproteobacteria</taxon>
        <taxon>Enterobacterales</taxon>
        <taxon>Enterobacteriaceae</taxon>
        <taxon>Escherichia</taxon>
    </lineage>
</organism>
<feature type="chain" id="PRO_1000118370" description="ATP-dependent Clp protease ATP-binding subunit ClpX">
    <location>
        <begin position="1"/>
        <end position="424"/>
    </location>
</feature>
<feature type="domain" description="ClpX-type ZB" evidence="2">
    <location>
        <begin position="2"/>
        <end position="56"/>
    </location>
</feature>
<feature type="binding site" evidence="2">
    <location>
        <position position="15"/>
    </location>
    <ligand>
        <name>Zn(2+)</name>
        <dbReference type="ChEBI" id="CHEBI:29105"/>
    </ligand>
</feature>
<feature type="binding site" evidence="2">
    <location>
        <position position="18"/>
    </location>
    <ligand>
        <name>Zn(2+)</name>
        <dbReference type="ChEBI" id="CHEBI:29105"/>
    </ligand>
</feature>
<feature type="binding site" evidence="2">
    <location>
        <position position="37"/>
    </location>
    <ligand>
        <name>Zn(2+)</name>
        <dbReference type="ChEBI" id="CHEBI:29105"/>
    </ligand>
</feature>
<feature type="binding site" evidence="2">
    <location>
        <position position="40"/>
    </location>
    <ligand>
        <name>Zn(2+)</name>
        <dbReference type="ChEBI" id="CHEBI:29105"/>
    </ligand>
</feature>
<feature type="binding site" evidence="1">
    <location>
        <begin position="120"/>
        <end position="127"/>
    </location>
    <ligand>
        <name>ATP</name>
        <dbReference type="ChEBI" id="CHEBI:30616"/>
    </ligand>
</feature>
<proteinExistence type="inferred from homology"/>